<sequence length="389" mass="43048">MAIGTPLLKGSIKFLLLGSGELGKEVVIEAQRLGIECIAVDRYQNAPAMQVAHKSYVIDMKDYDALMAIIEREEPDYIVPEIEAINTDALIDAEKMGYTVIPTAEATKITMNRELIRRLAAEKLGLKTAKYEFADSLEELRDAVEKLGLPCVVKPIMSSSGKGQSVVRSEEDIEKAWKIAKEGARGIGNRVIVEEFINFDYEITLLTARTAEGTKFCEPIGHVQIDGDYHESWQPHNMSAELKEQAQDIAKKVTDALGGYGIFGVELFVKGDEVIFSEVSPRPHDTGMVTMITQEMSEFEIHVRAILGLPVSTKLIHPGASHVIKAEINKYAPKYHIEDALKVPNTKLRLFGKPNAKVGRRMGVALAYADSVEKARELAEKCAHAVRIE</sequence>
<name>PURT_METJA</name>
<reference key="1">
    <citation type="journal article" date="1996" name="Science">
        <title>Complete genome sequence of the methanogenic archaeon, Methanococcus jannaschii.</title>
        <authorList>
            <person name="Bult C.J."/>
            <person name="White O."/>
            <person name="Olsen G.J."/>
            <person name="Zhou L."/>
            <person name="Fleischmann R.D."/>
            <person name="Sutton G.G."/>
            <person name="Blake J.A."/>
            <person name="FitzGerald L.M."/>
            <person name="Clayton R.A."/>
            <person name="Gocayne J.D."/>
            <person name="Kerlavage A.R."/>
            <person name="Dougherty B.A."/>
            <person name="Tomb J.-F."/>
            <person name="Adams M.D."/>
            <person name="Reich C.I."/>
            <person name="Overbeek R."/>
            <person name="Kirkness E.F."/>
            <person name="Weinstock K.G."/>
            <person name="Merrick J.M."/>
            <person name="Glodek A."/>
            <person name="Scott J.L."/>
            <person name="Geoghagen N.S.M."/>
            <person name="Weidman J.F."/>
            <person name="Fuhrmann J.L."/>
            <person name="Nguyen D."/>
            <person name="Utterback T.R."/>
            <person name="Kelley J.M."/>
            <person name="Peterson J.D."/>
            <person name="Sadow P.W."/>
            <person name="Hanna M.C."/>
            <person name="Cotton M.D."/>
            <person name="Roberts K.M."/>
            <person name="Hurst M.A."/>
            <person name="Kaine B.P."/>
            <person name="Borodovsky M."/>
            <person name="Klenk H.-P."/>
            <person name="Fraser C.M."/>
            <person name="Smith H.O."/>
            <person name="Woese C.R."/>
            <person name="Venter J.C."/>
        </authorList>
    </citation>
    <scope>NUCLEOTIDE SEQUENCE [LARGE SCALE GENOMIC DNA]</scope>
    <source>
        <strain>ATCC 43067 / DSM 2661 / JAL-1 / JCM 10045 / NBRC 100440</strain>
    </source>
</reference>
<evidence type="ECO:0000255" key="1">
    <source>
        <dbReference type="HAMAP-Rule" id="MF_01643"/>
    </source>
</evidence>
<evidence type="ECO:0000305" key="2"/>
<feature type="chain" id="PRO_0000074959" description="Formate-dependent phosphoribosylglycinamide formyltransferase">
    <location>
        <begin position="1"/>
        <end position="389"/>
    </location>
</feature>
<feature type="domain" description="ATP-grasp" evidence="1">
    <location>
        <begin position="118"/>
        <end position="307"/>
    </location>
</feature>
<feature type="binding site" evidence="1">
    <location>
        <begin position="21"/>
        <end position="22"/>
    </location>
    <ligand>
        <name>N(1)-(5-phospho-beta-D-ribosyl)glycinamide</name>
        <dbReference type="ChEBI" id="CHEBI:143788"/>
    </ligand>
</feature>
<feature type="binding site" evidence="1">
    <location>
        <position position="81"/>
    </location>
    <ligand>
        <name>N(1)-(5-phospho-beta-D-ribosyl)glycinamide</name>
        <dbReference type="ChEBI" id="CHEBI:143788"/>
    </ligand>
</feature>
<feature type="binding site" evidence="1">
    <location>
        <position position="113"/>
    </location>
    <ligand>
        <name>ATP</name>
        <dbReference type="ChEBI" id="CHEBI:30616"/>
    </ligand>
</feature>
<feature type="binding site" evidence="1">
    <location>
        <position position="154"/>
    </location>
    <ligand>
        <name>ATP</name>
        <dbReference type="ChEBI" id="CHEBI:30616"/>
    </ligand>
</feature>
<feature type="binding site" evidence="1">
    <location>
        <begin position="159"/>
        <end position="164"/>
    </location>
    <ligand>
        <name>ATP</name>
        <dbReference type="ChEBI" id="CHEBI:30616"/>
    </ligand>
</feature>
<feature type="binding site" evidence="1">
    <location>
        <begin position="194"/>
        <end position="197"/>
    </location>
    <ligand>
        <name>ATP</name>
        <dbReference type="ChEBI" id="CHEBI:30616"/>
    </ligand>
</feature>
<feature type="binding site" evidence="1">
    <location>
        <position position="202"/>
    </location>
    <ligand>
        <name>ATP</name>
        <dbReference type="ChEBI" id="CHEBI:30616"/>
    </ligand>
</feature>
<feature type="binding site" evidence="1">
    <location>
        <position position="266"/>
    </location>
    <ligand>
        <name>Mg(2+)</name>
        <dbReference type="ChEBI" id="CHEBI:18420"/>
    </ligand>
</feature>
<feature type="binding site" evidence="1">
    <location>
        <position position="278"/>
    </location>
    <ligand>
        <name>Mg(2+)</name>
        <dbReference type="ChEBI" id="CHEBI:18420"/>
    </ligand>
</feature>
<feature type="binding site" evidence="1">
    <location>
        <position position="285"/>
    </location>
    <ligand>
        <name>N(1)-(5-phospho-beta-D-ribosyl)glycinamide</name>
        <dbReference type="ChEBI" id="CHEBI:143788"/>
    </ligand>
</feature>
<feature type="binding site" evidence="1">
    <location>
        <position position="353"/>
    </location>
    <ligand>
        <name>N(1)-(5-phospho-beta-D-ribosyl)glycinamide</name>
        <dbReference type="ChEBI" id="CHEBI:143788"/>
    </ligand>
</feature>
<feature type="binding site" evidence="1">
    <location>
        <begin position="360"/>
        <end position="361"/>
    </location>
    <ligand>
        <name>N(1)-(5-phospho-beta-D-ribosyl)glycinamide</name>
        <dbReference type="ChEBI" id="CHEBI:143788"/>
    </ligand>
</feature>
<organism>
    <name type="scientific">Methanocaldococcus jannaschii (strain ATCC 43067 / DSM 2661 / JAL-1 / JCM 10045 / NBRC 100440)</name>
    <name type="common">Methanococcus jannaschii</name>
    <dbReference type="NCBI Taxonomy" id="243232"/>
    <lineage>
        <taxon>Archaea</taxon>
        <taxon>Methanobacteriati</taxon>
        <taxon>Methanobacteriota</taxon>
        <taxon>Methanomada group</taxon>
        <taxon>Methanococci</taxon>
        <taxon>Methanococcales</taxon>
        <taxon>Methanocaldococcaceae</taxon>
        <taxon>Methanocaldococcus</taxon>
    </lineage>
</organism>
<gene>
    <name evidence="1" type="primary">purT</name>
    <name type="ordered locus">MJ1486</name>
</gene>
<accession>Q58881</accession>
<comment type="function">
    <text evidence="1">Involved in the de novo purine biosynthesis. Catalyzes the transfer of formate to 5-phospho-ribosyl-glycinamide (GAR), producing 5-phospho-ribosyl-N-formylglycinamide (FGAR). Formate is provided by PurU via hydrolysis of 10-formyl-tetrahydrofolate.</text>
</comment>
<comment type="catalytic activity">
    <reaction evidence="1">
        <text>N(1)-(5-phospho-beta-D-ribosyl)glycinamide + formate + ATP = N(2)-formyl-N(1)-(5-phospho-beta-D-ribosyl)glycinamide + ADP + phosphate + H(+)</text>
        <dbReference type="Rhea" id="RHEA:24829"/>
        <dbReference type="ChEBI" id="CHEBI:15378"/>
        <dbReference type="ChEBI" id="CHEBI:15740"/>
        <dbReference type="ChEBI" id="CHEBI:30616"/>
        <dbReference type="ChEBI" id="CHEBI:43474"/>
        <dbReference type="ChEBI" id="CHEBI:143788"/>
        <dbReference type="ChEBI" id="CHEBI:147286"/>
        <dbReference type="ChEBI" id="CHEBI:456216"/>
        <dbReference type="EC" id="6.3.1.21"/>
    </reaction>
    <physiologicalReaction direction="left-to-right" evidence="1">
        <dbReference type="Rhea" id="RHEA:24830"/>
    </physiologicalReaction>
</comment>
<comment type="pathway">
    <text evidence="1">Purine metabolism; IMP biosynthesis via de novo pathway; N(2)-formyl-N(1)-(5-phospho-D-ribosyl)glycinamide from N(1)-(5-phospho-D-ribosyl)glycinamide (formate route): step 1/1.</text>
</comment>
<comment type="subunit">
    <text evidence="1">Homodimer.</text>
</comment>
<comment type="similarity">
    <text evidence="1">Belongs to the PurK/PurT family.</text>
</comment>
<comment type="sequence caution" evidence="2">
    <conflict type="erroneous initiation">
        <sequence resource="EMBL-CDS" id="AAB99496"/>
    </conflict>
</comment>
<proteinExistence type="inferred from homology"/>
<dbReference type="EC" id="6.3.1.21" evidence="1"/>
<dbReference type="EMBL" id="L77117">
    <property type="protein sequence ID" value="AAB99496.1"/>
    <property type="status" value="ALT_INIT"/>
    <property type="molecule type" value="Genomic_DNA"/>
</dbReference>
<dbReference type="PIR" id="E64485">
    <property type="entry name" value="E64485"/>
</dbReference>
<dbReference type="RefSeq" id="WP_064496844.1">
    <property type="nucleotide sequence ID" value="NC_000909.1"/>
</dbReference>
<dbReference type="SMR" id="Q58881"/>
<dbReference type="FunCoup" id="Q58881">
    <property type="interactions" value="67"/>
</dbReference>
<dbReference type="STRING" id="243232.MJ_1486"/>
<dbReference type="PaxDb" id="243232-MJ_1486"/>
<dbReference type="EnsemblBacteria" id="AAB99496">
    <property type="protein sequence ID" value="AAB99496"/>
    <property type="gene ID" value="MJ_1486"/>
</dbReference>
<dbReference type="GeneID" id="1452392"/>
<dbReference type="KEGG" id="mja:MJ_1486"/>
<dbReference type="eggNOG" id="arCOG01598">
    <property type="taxonomic scope" value="Archaea"/>
</dbReference>
<dbReference type="HOGENOM" id="CLU_011534_1_3_2"/>
<dbReference type="InParanoid" id="Q58881"/>
<dbReference type="OrthoDB" id="9299at2157"/>
<dbReference type="PhylomeDB" id="Q58881"/>
<dbReference type="BioCyc" id="MetaCyc:MONOMER-14618"/>
<dbReference type="UniPathway" id="UPA00074">
    <property type="reaction ID" value="UER00127"/>
</dbReference>
<dbReference type="Proteomes" id="UP000000805">
    <property type="component" value="Chromosome"/>
</dbReference>
<dbReference type="GO" id="GO:0005829">
    <property type="term" value="C:cytosol"/>
    <property type="evidence" value="ECO:0000318"/>
    <property type="project" value="GO_Central"/>
</dbReference>
<dbReference type="GO" id="GO:0005524">
    <property type="term" value="F:ATP binding"/>
    <property type="evidence" value="ECO:0007669"/>
    <property type="project" value="UniProtKB-UniRule"/>
</dbReference>
<dbReference type="GO" id="GO:0000287">
    <property type="term" value="F:magnesium ion binding"/>
    <property type="evidence" value="ECO:0007669"/>
    <property type="project" value="InterPro"/>
</dbReference>
<dbReference type="GO" id="GO:0043815">
    <property type="term" value="F:phosphoribosylglycinamide formyltransferase 2 activity"/>
    <property type="evidence" value="ECO:0007669"/>
    <property type="project" value="UniProtKB-UniRule"/>
</dbReference>
<dbReference type="GO" id="GO:0004644">
    <property type="term" value="F:phosphoribosylglycinamide formyltransferase activity"/>
    <property type="evidence" value="ECO:0007669"/>
    <property type="project" value="InterPro"/>
</dbReference>
<dbReference type="GO" id="GO:0006189">
    <property type="term" value="P:'de novo' IMP biosynthetic process"/>
    <property type="evidence" value="ECO:0007669"/>
    <property type="project" value="UniProtKB-UniRule"/>
</dbReference>
<dbReference type="FunFam" id="3.30.1490.20:FF:000013">
    <property type="entry name" value="Formate-dependent phosphoribosylglycinamide formyltransferase"/>
    <property type="match status" value="1"/>
</dbReference>
<dbReference type="FunFam" id="3.40.50.20:FF:000007">
    <property type="entry name" value="Formate-dependent phosphoribosylglycinamide formyltransferase"/>
    <property type="match status" value="1"/>
</dbReference>
<dbReference type="Gene3D" id="3.40.50.20">
    <property type="match status" value="1"/>
</dbReference>
<dbReference type="Gene3D" id="3.30.1490.20">
    <property type="entry name" value="ATP-grasp fold, A domain"/>
    <property type="match status" value="1"/>
</dbReference>
<dbReference type="Gene3D" id="3.30.470.20">
    <property type="entry name" value="ATP-grasp fold, B domain"/>
    <property type="match status" value="1"/>
</dbReference>
<dbReference type="HAMAP" id="MF_01643">
    <property type="entry name" value="PurT"/>
    <property type="match status" value="1"/>
</dbReference>
<dbReference type="InterPro" id="IPR011761">
    <property type="entry name" value="ATP-grasp"/>
</dbReference>
<dbReference type="InterPro" id="IPR003135">
    <property type="entry name" value="ATP-grasp_carboxylate-amine"/>
</dbReference>
<dbReference type="InterPro" id="IPR013815">
    <property type="entry name" value="ATP_grasp_subdomain_1"/>
</dbReference>
<dbReference type="InterPro" id="IPR016185">
    <property type="entry name" value="PreATP-grasp_dom_sf"/>
</dbReference>
<dbReference type="InterPro" id="IPR005862">
    <property type="entry name" value="PurT"/>
</dbReference>
<dbReference type="InterPro" id="IPR054350">
    <property type="entry name" value="PurT/PurK_preATP-grasp"/>
</dbReference>
<dbReference type="InterPro" id="IPR048740">
    <property type="entry name" value="PurT_C"/>
</dbReference>
<dbReference type="InterPro" id="IPR011054">
    <property type="entry name" value="Rudment_hybrid_motif"/>
</dbReference>
<dbReference type="NCBIfam" id="NF006766">
    <property type="entry name" value="PRK09288.1"/>
    <property type="match status" value="1"/>
</dbReference>
<dbReference type="NCBIfam" id="TIGR01142">
    <property type="entry name" value="purT"/>
    <property type="match status" value="1"/>
</dbReference>
<dbReference type="PANTHER" id="PTHR43055">
    <property type="entry name" value="FORMATE-DEPENDENT PHOSPHORIBOSYLGLYCINAMIDE FORMYLTRANSFERASE"/>
    <property type="match status" value="1"/>
</dbReference>
<dbReference type="PANTHER" id="PTHR43055:SF1">
    <property type="entry name" value="FORMATE-DEPENDENT PHOSPHORIBOSYLGLYCINAMIDE FORMYLTRANSFERASE"/>
    <property type="match status" value="1"/>
</dbReference>
<dbReference type="Pfam" id="PF02222">
    <property type="entry name" value="ATP-grasp"/>
    <property type="match status" value="1"/>
</dbReference>
<dbReference type="Pfam" id="PF21244">
    <property type="entry name" value="PurT_C"/>
    <property type="match status" value="1"/>
</dbReference>
<dbReference type="Pfam" id="PF22660">
    <property type="entry name" value="RS_preATP-grasp-like"/>
    <property type="match status" value="1"/>
</dbReference>
<dbReference type="SUPFAM" id="SSF56059">
    <property type="entry name" value="Glutathione synthetase ATP-binding domain-like"/>
    <property type="match status" value="1"/>
</dbReference>
<dbReference type="SUPFAM" id="SSF52440">
    <property type="entry name" value="PreATP-grasp domain"/>
    <property type="match status" value="1"/>
</dbReference>
<dbReference type="SUPFAM" id="SSF51246">
    <property type="entry name" value="Rudiment single hybrid motif"/>
    <property type="match status" value="1"/>
</dbReference>
<dbReference type="PROSITE" id="PS50975">
    <property type="entry name" value="ATP_GRASP"/>
    <property type="match status" value="1"/>
</dbReference>
<protein>
    <recommendedName>
        <fullName evidence="1">Formate-dependent phosphoribosylglycinamide formyltransferase</fullName>
        <ecNumber evidence="1">6.3.1.21</ecNumber>
    </recommendedName>
    <alternativeName>
        <fullName evidence="1">5'-phosphoribosylglycinamide transformylase 2</fullName>
    </alternativeName>
    <alternativeName>
        <fullName evidence="1">Formate-dependent GAR transformylase</fullName>
    </alternativeName>
    <alternativeName>
        <fullName evidence="1">GAR transformylase 2</fullName>
        <shortName evidence="1">GART 2</shortName>
    </alternativeName>
    <alternativeName>
        <fullName evidence="1">Non-folate glycinamide ribonucleotide transformylase</fullName>
    </alternativeName>
    <alternativeName>
        <fullName evidence="1">Phosphoribosylglycinamide formyltransferase 2</fullName>
    </alternativeName>
</protein>
<keyword id="KW-0067">ATP-binding</keyword>
<keyword id="KW-0436">Ligase</keyword>
<keyword id="KW-0460">Magnesium</keyword>
<keyword id="KW-0479">Metal-binding</keyword>
<keyword id="KW-0547">Nucleotide-binding</keyword>
<keyword id="KW-0658">Purine biosynthesis</keyword>
<keyword id="KW-1185">Reference proteome</keyword>